<name>LST_NEIMA</name>
<proteinExistence type="inferred from homology"/>
<gene>
    <name evidence="1" type="primary">lst</name>
    <name type="ordered locus">NMA1118</name>
</gene>
<comment type="function">
    <text evidence="1">Catalyzes the transfer of sialic acid from the substrate CMP-N-acetylneuraminate to the terminal galactose residue of the lacto-N-neotetraose branch of surface lipooligosaccharide (LOS), forming an alpha-2,3-sialyl linkage. Thus, functions in the sialylation of LOS, which plays a role in the evasion of the host immune response by protecting N.meningitidis from complement-mediated serum killing and from phagocytic killing by neutrophils.</text>
</comment>
<comment type="catalytic activity">
    <reaction evidence="1">
        <text>a beta-D-galactosyl-(1-&gt;4)-N-acetyl-beta-D-glucosaminyl derivative + CMP-N-acetyl-beta-neuraminate = an N-acetyl-alpha-neuraminyl-(2-&gt;3)-beta-D-galactosyl-(1-&gt;4)-N-acetyl-beta-D-glucosaminyl derivative + CMP + H(+)</text>
        <dbReference type="Rhea" id="RHEA:52316"/>
        <dbReference type="ChEBI" id="CHEBI:15378"/>
        <dbReference type="ChEBI" id="CHEBI:57812"/>
        <dbReference type="ChEBI" id="CHEBI:60377"/>
        <dbReference type="ChEBI" id="CHEBI:133507"/>
        <dbReference type="ChEBI" id="CHEBI:136545"/>
        <dbReference type="EC" id="2.4.3.6"/>
    </reaction>
</comment>
<comment type="pathway">
    <text evidence="1">Bacterial outer membrane biogenesis; lipooligosaccharide biosynthesis.</text>
</comment>
<comment type="subunit">
    <text evidence="1">Homodimer.</text>
</comment>
<comment type="subcellular location">
    <subcellularLocation>
        <location evidence="1">Cell outer membrane</location>
        <topology evidence="1">Peripheral membrane protein</topology>
        <orientation evidence="1">Extracellular side</orientation>
    </subcellularLocation>
</comment>
<comment type="similarity">
    <text evidence="2">Belongs to the glycosyltransferase 52 family.</text>
</comment>
<organism>
    <name type="scientific">Neisseria meningitidis serogroup A / serotype 4A (strain DSM 15465 / Z2491)</name>
    <dbReference type="NCBI Taxonomy" id="122587"/>
    <lineage>
        <taxon>Bacteria</taxon>
        <taxon>Pseudomonadati</taxon>
        <taxon>Pseudomonadota</taxon>
        <taxon>Betaproteobacteria</taxon>
        <taxon>Neisseriales</taxon>
        <taxon>Neisseriaceae</taxon>
        <taxon>Neisseria</taxon>
    </lineage>
</organism>
<reference key="1">
    <citation type="journal article" date="2000" name="Nature">
        <title>Complete DNA sequence of a serogroup A strain of Neisseria meningitidis Z2491.</title>
        <authorList>
            <person name="Parkhill J."/>
            <person name="Achtman M."/>
            <person name="James K.D."/>
            <person name="Bentley S.D."/>
            <person name="Churcher C.M."/>
            <person name="Klee S.R."/>
            <person name="Morelli G."/>
            <person name="Basham D."/>
            <person name="Brown D."/>
            <person name="Chillingworth T."/>
            <person name="Davies R.M."/>
            <person name="Davis P."/>
            <person name="Devlin K."/>
            <person name="Feltwell T."/>
            <person name="Hamlin N."/>
            <person name="Holroyd S."/>
            <person name="Jagels K."/>
            <person name="Leather S."/>
            <person name="Moule S."/>
            <person name="Mungall K.L."/>
            <person name="Quail M.A."/>
            <person name="Rajandream M.A."/>
            <person name="Rutherford K.M."/>
            <person name="Simmonds M."/>
            <person name="Skelton J."/>
            <person name="Whitehead S."/>
            <person name="Spratt B.G."/>
            <person name="Barrell B.G."/>
        </authorList>
    </citation>
    <scope>NUCLEOTIDE SEQUENCE [LARGE SCALE GENOMIC DNA]</scope>
    <source>
        <strain>DSM 15465 / Z2491</strain>
    </source>
</reference>
<keyword id="KW-0998">Cell outer membrane</keyword>
<keyword id="KW-0328">Glycosyltransferase</keyword>
<keyword id="KW-0448">Lipopolysaccharide biosynthesis</keyword>
<keyword id="KW-0472">Membrane</keyword>
<keyword id="KW-0808">Transferase</keyword>
<evidence type="ECO:0000250" key="1">
    <source>
        <dbReference type="UniProtKB" id="P72097"/>
    </source>
</evidence>
<evidence type="ECO:0000305" key="2"/>
<feature type="chain" id="PRO_0000080573" description="N-acetyllactosaminide alpha-2,3-sialyltransferase">
    <location>
        <begin position="1"/>
        <end position="371"/>
    </location>
</feature>
<feature type="active site" description="Proton acceptor" evidence="1">
    <location>
        <position position="258"/>
    </location>
</feature>
<feature type="active site" description="Proton donor" evidence="1">
    <location>
        <position position="280"/>
    </location>
</feature>
<feature type="binding site" evidence="1">
    <location>
        <position position="255"/>
    </location>
    <ligand>
        <name>CMP-N-acetyl-beta-neuraminate</name>
        <dbReference type="ChEBI" id="CHEBI:57812"/>
    </ligand>
</feature>
<feature type="binding site" evidence="1">
    <location>
        <begin position="278"/>
        <end position="282"/>
    </location>
    <ligand>
        <name>CMP-N-acetyl-beta-neuraminate</name>
        <dbReference type="ChEBI" id="CHEBI:57812"/>
    </ligand>
</feature>
<feature type="binding site" evidence="1">
    <location>
        <begin position="299"/>
        <end position="300"/>
    </location>
    <ligand>
        <name>CMP-N-acetyl-beta-neuraminate</name>
        <dbReference type="ChEBI" id="CHEBI:57812"/>
    </ligand>
</feature>
<feature type="binding site" evidence="1">
    <location>
        <begin position="322"/>
        <end position="323"/>
    </location>
    <ligand>
        <name>CMP-N-acetyl-beta-neuraminate</name>
        <dbReference type="ChEBI" id="CHEBI:57812"/>
    </ligand>
</feature>
<sequence length="371" mass="42554">MGLKKACLTVLCLIVFCFGIFYTFDRVNQGERNAVSLLKDKLFNEEGEPVNLIFCYTILQMKVAERIMAQHPGERFYVVLMSENRNEKYDYYFNQIKDKAERAYFFHLPYGLNKSFNFIPTMAELKVKSMLLPKVKRIYLASLEKVSIAAFLSTYPDAEIKTFDDGTGNLIQSSSYLGDEFSVNGTIKRNFARMMIGDWSIAKTRNASDEHYTIFKGLKNIMDDGRRKMTYLPLFDASELKAGDETGGTVRILLGSPDKEMKEISEKAAKNFNIQYVAPHPRQTYGLSGVTTLNSPYVIEDYILREIKKNPHTRYEIYTFFSGAALTMKDFPNVHVYALKPASLPEDYWLKPVYALFTQSGIPILTFDDKD</sequence>
<dbReference type="EC" id="2.4.3.6" evidence="1"/>
<dbReference type="EMBL" id="AL157959">
    <property type="protein sequence ID" value="CAM08326.1"/>
    <property type="molecule type" value="Genomic_DNA"/>
</dbReference>
<dbReference type="PIR" id="B81878">
    <property type="entry name" value="B81878"/>
</dbReference>
<dbReference type="RefSeq" id="WP_002236898.1">
    <property type="nucleotide sequence ID" value="NC_003116.1"/>
</dbReference>
<dbReference type="SMR" id="Q9JUV5"/>
<dbReference type="CAZy" id="GT52">
    <property type="family name" value="Glycosyltransferase Family 52"/>
</dbReference>
<dbReference type="EnsemblBacteria" id="CAM08326">
    <property type="protein sequence ID" value="CAM08326"/>
    <property type="gene ID" value="NMA1118"/>
</dbReference>
<dbReference type="KEGG" id="nma:NMA1118"/>
<dbReference type="HOGENOM" id="CLU_076077_0_0_4"/>
<dbReference type="UniPathway" id="UPA00501"/>
<dbReference type="Proteomes" id="UP000000626">
    <property type="component" value="Chromosome"/>
</dbReference>
<dbReference type="GO" id="GO:0009279">
    <property type="term" value="C:cell outer membrane"/>
    <property type="evidence" value="ECO:0007669"/>
    <property type="project" value="UniProtKB-SubCell"/>
</dbReference>
<dbReference type="GO" id="GO:0008118">
    <property type="term" value="F:N-acetyllactosaminide alpha-2,3-sialyltransferase activity"/>
    <property type="evidence" value="ECO:0007669"/>
    <property type="project" value="RHEA"/>
</dbReference>
<dbReference type="GO" id="GO:0009103">
    <property type="term" value="P:lipopolysaccharide biosynthetic process"/>
    <property type="evidence" value="ECO:0007669"/>
    <property type="project" value="UniProtKB-KW"/>
</dbReference>
<dbReference type="Gene3D" id="3.30.370.20">
    <property type="match status" value="1"/>
</dbReference>
<dbReference type="InterPro" id="IPR012477">
    <property type="entry name" value="Glyco_transf_52"/>
</dbReference>
<dbReference type="Pfam" id="PF07922">
    <property type="entry name" value="Glyco_transf_52"/>
    <property type="match status" value="1"/>
</dbReference>
<protein>
    <recommendedName>
        <fullName evidence="1">N-acetyllactosaminide alpha-2,3-sialyltransferase</fullName>
        <ecNumber evidence="1">2.4.3.6</ecNumber>
    </recommendedName>
    <alternativeName>
        <fullName evidence="1">CMP-N-acetylneuraminate:beta-galactoside alpha-2,3-sialyltransferase</fullName>
        <shortName evidence="1">CMP-Neu5Ac:beta-galactoside alpha-2,3-sialyltransferase</shortName>
    </alternativeName>
    <alternativeName>
        <fullName evidence="1">Lipooligosaccharide sialyltransferase</fullName>
        <shortName evidence="1">LOS sialyltransferase</shortName>
    </alternativeName>
</protein>
<accession>Q9JUV5</accession>
<accession>A1IRE0</accession>